<evidence type="ECO:0000250" key="1">
    <source>
        <dbReference type="UniProtKB" id="Q6Z869"/>
    </source>
</evidence>
<evidence type="ECO:0000255" key="2">
    <source>
        <dbReference type="PROSITE-ProRule" id="PRU00625"/>
    </source>
</evidence>
<evidence type="ECO:0000256" key="3">
    <source>
        <dbReference type="SAM" id="MobiDB-lite"/>
    </source>
</evidence>
<evidence type="ECO:0000269" key="4">
    <source>
    </source>
</evidence>
<evidence type="ECO:0000305" key="5"/>
<evidence type="ECO:0000312" key="6">
    <source>
        <dbReference type="EMBL" id="BAD67813.1"/>
    </source>
</evidence>
<evidence type="ECO:0000312" key="7">
    <source>
        <dbReference type="EMBL" id="BAF04097.2"/>
    </source>
</evidence>
<comment type="function">
    <text evidence="1">Probable transcription factor that may play a role in regulatory networks controlling development and metabolism.</text>
</comment>
<comment type="subunit">
    <text evidence="4">Interacts with ACA5.</text>
</comment>
<comment type="subcellular location">
    <subcellularLocation>
        <location evidence="2">Nucleus</location>
    </subcellularLocation>
</comment>
<comment type="sequence caution" evidence="5">
    <conflict type="erroneous gene model prediction">
        <sequence resource="EMBL-CDS" id="BAD67813"/>
    </conflict>
</comment>
<comment type="sequence caution" evidence="5">
    <conflict type="erroneous gene model prediction">
        <sequence resource="EMBL-CDS" id="BAF04097"/>
    </conflict>
</comment>
<comment type="sequence caution" evidence="5">
    <conflict type="erroneous gene model prediction">
        <sequence resource="EMBL-CDS" id="BAS70684"/>
    </conflict>
</comment>
<protein>
    <recommendedName>
        <fullName evidence="5">Transcription factor NIGTH1</fullName>
    </recommendedName>
    <alternativeName>
        <fullName evidence="5">MYB-domain transcription factor NIGT1 homolog 1</fullName>
    </alternativeName>
</protein>
<name>NOH1_ORYSJ</name>
<accession>Q5VRW2</accession>
<accession>A0A0P0UYW1</accession>
<accession>Q0JQ81</accession>
<feature type="chain" id="PRO_0000439550" description="Transcription factor NIGTH1">
    <location>
        <begin position="1"/>
        <end position="507"/>
    </location>
</feature>
<feature type="domain" description="HTH myb-type" evidence="2">
    <location>
        <begin position="263"/>
        <end position="323"/>
    </location>
</feature>
<feature type="DNA-binding region" description="H-T-H motif" evidence="2">
    <location>
        <begin position="294"/>
        <end position="319"/>
    </location>
</feature>
<feature type="region of interest" description="Disordered" evidence="3">
    <location>
        <begin position="139"/>
        <end position="172"/>
    </location>
</feature>
<feature type="region of interest" description="Disordered" evidence="3">
    <location>
        <begin position="238"/>
        <end position="268"/>
    </location>
</feature>
<feature type="region of interest" description="Disordered" evidence="3">
    <location>
        <begin position="402"/>
        <end position="507"/>
    </location>
</feature>
<feature type="compositionally biased region" description="Basic and acidic residues" evidence="3">
    <location>
        <begin position="152"/>
        <end position="161"/>
    </location>
</feature>
<feature type="compositionally biased region" description="Low complexity" evidence="3">
    <location>
        <begin position="412"/>
        <end position="433"/>
    </location>
</feature>
<feature type="compositionally biased region" description="Gly residues" evidence="3">
    <location>
        <begin position="437"/>
        <end position="446"/>
    </location>
</feature>
<feature type="compositionally biased region" description="Acidic residues" evidence="3">
    <location>
        <begin position="456"/>
        <end position="476"/>
    </location>
</feature>
<keyword id="KW-0238">DNA-binding</keyword>
<keyword id="KW-0539">Nucleus</keyword>
<keyword id="KW-1185">Reference proteome</keyword>
<keyword id="KW-0804">Transcription</keyword>
<keyword id="KW-0805">Transcription regulation</keyword>
<sequence>MASSSSDLTLDDHHHLTAVAAASGQATQKLQEFLSRLEEERLKIDAFKRELPLCMQLLNHAMEAYRQQLEAYQMGSQHSAAAAAAARAPLVLEEFIPVKNIGIDVVAADKAAAAGGNSVSSEKASWMVSAQLWNAPASASAADTAAKGPQTPKEHSEHHPLDTSPKLITALDGGGGGGGAFLPFSKDNAMGDGSAAAAAALPELALAPAEKAADAITIAAGEVDKKPYAHDNGVVARSREAQNGGKPPSTPSDGQAVPPPPQPHRKARRCWSPELHRRFVNALQILGGAQVATPKQIRELMKVDGLTNDEVKSHLQKYRLHTRRPMPSPAPPTAATPQLVVLGGIWVPPEYATQAAGPAIYGAHPATQPHYTAAVAAQEYYHHHHHHLQHHPAAAALVHHRAVAPPPPLPPQQQLAPPYSAKSSASARLGSPDSDGRGSGGGGGAAASGAGRDMSESIEEEGEGEEREDDDDDDEMAATNNAHAVDGDDDNDEINTTTTTSAGAINY</sequence>
<gene>
    <name evidence="5" type="primary">NHO1</name>
    <name evidence="7" type="ordered locus">Os01g0176700</name>
    <name evidence="5" type="ordered locus">LOC_Os01g08160</name>
    <name evidence="6" type="ORF">P0013F10.17</name>
</gene>
<dbReference type="EMBL" id="AP002523">
    <property type="protein sequence ID" value="BAD67813.1"/>
    <property type="status" value="ALT_SEQ"/>
    <property type="molecule type" value="Genomic_DNA"/>
</dbReference>
<dbReference type="EMBL" id="AP008207">
    <property type="protein sequence ID" value="BAF04097.2"/>
    <property type="status" value="ALT_SEQ"/>
    <property type="molecule type" value="Genomic_DNA"/>
</dbReference>
<dbReference type="EMBL" id="AP014957">
    <property type="protein sequence ID" value="BAS70684.1"/>
    <property type="status" value="ALT_SEQ"/>
    <property type="molecule type" value="Genomic_DNA"/>
</dbReference>
<dbReference type="SMR" id="Q5VRW2"/>
<dbReference type="FunCoup" id="Q5VRW2">
    <property type="interactions" value="1080"/>
</dbReference>
<dbReference type="STRING" id="39947.Q5VRW2"/>
<dbReference type="PaxDb" id="39947-Q5VRW2"/>
<dbReference type="KEGG" id="dosa:Os01g0176700"/>
<dbReference type="KEGG" id="osa:4326224"/>
<dbReference type="eggNOG" id="ENOG502QU6F">
    <property type="taxonomic scope" value="Eukaryota"/>
</dbReference>
<dbReference type="HOGENOM" id="CLU_036551_0_1_1"/>
<dbReference type="InParanoid" id="Q5VRW2"/>
<dbReference type="OrthoDB" id="1908613at2759"/>
<dbReference type="Proteomes" id="UP000000763">
    <property type="component" value="Chromosome 1"/>
</dbReference>
<dbReference type="Proteomes" id="UP000059680">
    <property type="component" value="Chromosome 1"/>
</dbReference>
<dbReference type="GO" id="GO:0005634">
    <property type="term" value="C:nucleus"/>
    <property type="evidence" value="ECO:0007669"/>
    <property type="project" value="UniProtKB-SubCell"/>
</dbReference>
<dbReference type="GO" id="GO:0003677">
    <property type="term" value="F:DNA binding"/>
    <property type="evidence" value="ECO:0007669"/>
    <property type="project" value="UniProtKB-KW"/>
</dbReference>
<dbReference type="GO" id="GO:0003700">
    <property type="term" value="F:DNA-binding transcription factor activity"/>
    <property type="evidence" value="ECO:0007669"/>
    <property type="project" value="InterPro"/>
</dbReference>
<dbReference type="FunFam" id="1.10.10.60:FF:000002">
    <property type="entry name" value="Myb family transcription factor"/>
    <property type="match status" value="1"/>
</dbReference>
<dbReference type="Gene3D" id="1.10.10.60">
    <property type="entry name" value="Homeodomain-like"/>
    <property type="match status" value="1"/>
</dbReference>
<dbReference type="InterPro" id="IPR009057">
    <property type="entry name" value="Homeodomain-like_sf"/>
</dbReference>
<dbReference type="InterPro" id="IPR044787">
    <property type="entry name" value="HRS1-like"/>
</dbReference>
<dbReference type="InterPro" id="IPR017930">
    <property type="entry name" value="Myb_dom"/>
</dbReference>
<dbReference type="InterPro" id="IPR006447">
    <property type="entry name" value="Myb_dom_plants"/>
</dbReference>
<dbReference type="InterPro" id="IPR001005">
    <property type="entry name" value="SANT/Myb"/>
</dbReference>
<dbReference type="NCBIfam" id="TIGR01557">
    <property type="entry name" value="myb_SHAQKYF"/>
    <property type="match status" value="1"/>
</dbReference>
<dbReference type="PANTHER" id="PTHR31003">
    <property type="entry name" value="MYB FAMILY TRANSCRIPTION FACTOR"/>
    <property type="match status" value="1"/>
</dbReference>
<dbReference type="PANTHER" id="PTHR31003:SF19">
    <property type="entry name" value="MYB FAMILY TRANSCRIPTION FACTOR EFM"/>
    <property type="match status" value="1"/>
</dbReference>
<dbReference type="Pfam" id="PF00249">
    <property type="entry name" value="Myb_DNA-binding"/>
    <property type="match status" value="1"/>
</dbReference>
<dbReference type="SUPFAM" id="SSF46689">
    <property type="entry name" value="Homeodomain-like"/>
    <property type="match status" value="1"/>
</dbReference>
<dbReference type="PROSITE" id="PS51294">
    <property type="entry name" value="HTH_MYB"/>
    <property type="match status" value="1"/>
</dbReference>
<reference key="1">
    <citation type="journal article" date="2002" name="Nature">
        <title>The genome sequence and structure of rice chromosome 1.</title>
        <authorList>
            <person name="Sasaki T."/>
            <person name="Matsumoto T."/>
            <person name="Yamamoto K."/>
            <person name="Sakata K."/>
            <person name="Baba T."/>
            <person name="Katayose Y."/>
            <person name="Wu J."/>
            <person name="Niimura Y."/>
            <person name="Cheng Z."/>
            <person name="Nagamura Y."/>
            <person name="Antonio B.A."/>
            <person name="Kanamori H."/>
            <person name="Hosokawa S."/>
            <person name="Masukawa M."/>
            <person name="Arikawa K."/>
            <person name="Chiden Y."/>
            <person name="Hayashi M."/>
            <person name="Okamoto M."/>
            <person name="Ando T."/>
            <person name="Aoki H."/>
            <person name="Arita K."/>
            <person name="Hamada M."/>
            <person name="Harada C."/>
            <person name="Hijishita S."/>
            <person name="Honda M."/>
            <person name="Ichikawa Y."/>
            <person name="Idonuma A."/>
            <person name="Iijima M."/>
            <person name="Ikeda M."/>
            <person name="Ikeno M."/>
            <person name="Ito S."/>
            <person name="Ito T."/>
            <person name="Ito Y."/>
            <person name="Ito Y."/>
            <person name="Iwabuchi A."/>
            <person name="Kamiya K."/>
            <person name="Karasawa W."/>
            <person name="Katagiri S."/>
            <person name="Kikuta A."/>
            <person name="Kobayashi N."/>
            <person name="Kono I."/>
            <person name="Machita K."/>
            <person name="Maehara T."/>
            <person name="Mizuno H."/>
            <person name="Mizubayashi T."/>
            <person name="Mukai Y."/>
            <person name="Nagasaki H."/>
            <person name="Nakashima M."/>
            <person name="Nakama Y."/>
            <person name="Nakamichi Y."/>
            <person name="Nakamura M."/>
            <person name="Namiki N."/>
            <person name="Negishi M."/>
            <person name="Ohta I."/>
            <person name="Ono N."/>
            <person name="Saji S."/>
            <person name="Sakai K."/>
            <person name="Shibata M."/>
            <person name="Shimokawa T."/>
            <person name="Shomura A."/>
            <person name="Song J."/>
            <person name="Takazaki Y."/>
            <person name="Terasawa K."/>
            <person name="Tsuji K."/>
            <person name="Waki K."/>
            <person name="Yamagata H."/>
            <person name="Yamane H."/>
            <person name="Yoshiki S."/>
            <person name="Yoshihara R."/>
            <person name="Yukawa K."/>
            <person name="Zhong H."/>
            <person name="Iwama H."/>
            <person name="Endo T."/>
            <person name="Ito H."/>
            <person name="Hahn J.H."/>
            <person name="Kim H.-I."/>
            <person name="Eun M.-Y."/>
            <person name="Yano M."/>
            <person name="Jiang J."/>
            <person name="Gojobori T."/>
        </authorList>
    </citation>
    <scope>NUCLEOTIDE SEQUENCE [LARGE SCALE GENOMIC DNA]</scope>
    <source>
        <strain>cv. Nipponbare</strain>
    </source>
</reference>
<reference key="2">
    <citation type="journal article" date="2005" name="Nature">
        <title>The map-based sequence of the rice genome.</title>
        <authorList>
            <consortium name="International rice genome sequencing project (IRGSP)"/>
        </authorList>
    </citation>
    <scope>NUCLEOTIDE SEQUENCE [LARGE SCALE GENOMIC DNA]</scope>
    <source>
        <strain>cv. Nipponbare</strain>
    </source>
</reference>
<reference key="3">
    <citation type="journal article" date="2008" name="Nucleic Acids Res.">
        <title>The rice annotation project database (RAP-DB): 2008 update.</title>
        <authorList>
            <consortium name="The rice annotation project (RAP)"/>
        </authorList>
    </citation>
    <scope>GENOME REANNOTATION</scope>
    <source>
        <strain>cv. Nipponbare</strain>
    </source>
</reference>
<reference key="4">
    <citation type="journal article" date="2013" name="Rice">
        <title>Improvement of the Oryza sativa Nipponbare reference genome using next generation sequence and optical map data.</title>
        <authorList>
            <person name="Kawahara Y."/>
            <person name="de la Bastide M."/>
            <person name="Hamilton J.P."/>
            <person name="Kanamori H."/>
            <person name="McCombie W.R."/>
            <person name="Ouyang S."/>
            <person name="Schwartz D.C."/>
            <person name="Tanaka T."/>
            <person name="Wu J."/>
            <person name="Zhou S."/>
            <person name="Childs K.L."/>
            <person name="Davidson R.M."/>
            <person name="Lin H."/>
            <person name="Quesada-Ocampo L."/>
            <person name="Vaillancourt B."/>
            <person name="Sakai H."/>
            <person name="Lee S.S."/>
            <person name="Kim J."/>
            <person name="Numa H."/>
            <person name="Itoh T."/>
            <person name="Buell C.R."/>
            <person name="Matsumoto T."/>
        </authorList>
    </citation>
    <scope>GENOME REANNOTATION</scope>
    <source>
        <strain>cv. Nipponbare</strain>
    </source>
</reference>
<reference key="5">
    <citation type="journal article" date="2014" name="Plant Physiol. Biochem.">
        <title>Salinity and drought tolerant OsACA6 enhances cold tolerance in transgenic tobacco by interacting with stress-inducible proteins.</title>
        <authorList>
            <person name="Kamrul Huda K.M."/>
            <person name="Akhter Banu M.S."/>
            <person name="Yadav S."/>
            <person name="Sahoo R.K."/>
            <person name="Tuteja R."/>
            <person name="Tuteja N."/>
        </authorList>
    </citation>
    <scope>INTERACTION WITH ACA5</scope>
</reference>
<proteinExistence type="evidence at protein level"/>
<organism>
    <name type="scientific">Oryza sativa subsp. japonica</name>
    <name type="common">Rice</name>
    <dbReference type="NCBI Taxonomy" id="39947"/>
    <lineage>
        <taxon>Eukaryota</taxon>
        <taxon>Viridiplantae</taxon>
        <taxon>Streptophyta</taxon>
        <taxon>Embryophyta</taxon>
        <taxon>Tracheophyta</taxon>
        <taxon>Spermatophyta</taxon>
        <taxon>Magnoliopsida</taxon>
        <taxon>Liliopsida</taxon>
        <taxon>Poales</taxon>
        <taxon>Poaceae</taxon>
        <taxon>BOP clade</taxon>
        <taxon>Oryzoideae</taxon>
        <taxon>Oryzeae</taxon>
        <taxon>Oryzinae</taxon>
        <taxon>Oryza</taxon>
        <taxon>Oryza sativa</taxon>
    </lineage>
</organism>